<evidence type="ECO:0000250" key="1"/>
<evidence type="ECO:0000255" key="2">
    <source>
        <dbReference type="PROSITE-ProRule" id="PRU00691"/>
    </source>
</evidence>
<evidence type="ECO:0000269" key="3">
    <source>
    </source>
</evidence>
<evidence type="ECO:0000305" key="4"/>
<accession>P60226</accession>
<accession>B4PZR8</accession>
<name>THIO1_DROYA</name>
<protein>
    <recommendedName>
        <fullName>Thioredoxin-1</fullName>
        <shortName>Trx-1</shortName>
    </recommendedName>
    <alternativeName>
        <fullName>Protein deadhead</fullName>
    </alternativeName>
</protein>
<dbReference type="EMBL" id="AY231790">
    <property type="protein sequence ID" value="AAR09813.1"/>
    <property type="molecule type" value="mRNA"/>
</dbReference>
<dbReference type="EMBL" id="CM000162">
    <property type="protein sequence ID" value="EDX01135.1"/>
    <property type="molecule type" value="Genomic_DNA"/>
</dbReference>
<dbReference type="SMR" id="P60226"/>
<dbReference type="EnsemblMetazoa" id="FBtr0403990">
    <property type="protein sequence ID" value="FBpp0362727"/>
    <property type="gene ID" value="FBgn0233920"/>
</dbReference>
<dbReference type="EnsemblMetazoa" id="XM_002099991.4">
    <property type="protein sequence ID" value="XP_002100027.1"/>
    <property type="gene ID" value="LOC6524164"/>
</dbReference>
<dbReference type="GeneID" id="6524164"/>
<dbReference type="KEGG" id="dya:Dyak_GE16391"/>
<dbReference type="eggNOG" id="KOG0907">
    <property type="taxonomic scope" value="Eukaryota"/>
</dbReference>
<dbReference type="HOGENOM" id="CLU_090389_14_1_1"/>
<dbReference type="OMA" id="STWHETH"/>
<dbReference type="OrthoDB" id="2121326at2759"/>
<dbReference type="PhylomeDB" id="P60226"/>
<dbReference type="Proteomes" id="UP000002282">
    <property type="component" value="Chromosome X"/>
</dbReference>
<dbReference type="GO" id="GO:0005829">
    <property type="term" value="C:cytosol"/>
    <property type="evidence" value="ECO:0007669"/>
    <property type="project" value="EnsemblMetazoa"/>
</dbReference>
<dbReference type="GO" id="GO:0005634">
    <property type="term" value="C:nucleus"/>
    <property type="evidence" value="ECO:0007669"/>
    <property type="project" value="UniProtKB-SubCell"/>
</dbReference>
<dbReference type="GO" id="GO:0015038">
    <property type="term" value="F:glutathione disulfide oxidoreductase activity"/>
    <property type="evidence" value="ECO:0007669"/>
    <property type="project" value="EnsemblMetazoa"/>
</dbReference>
<dbReference type="GO" id="GO:0015035">
    <property type="term" value="F:protein-disulfide reductase activity"/>
    <property type="evidence" value="ECO:0007669"/>
    <property type="project" value="EnsemblMetazoa"/>
</dbReference>
<dbReference type="GO" id="GO:0007143">
    <property type="term" value="P:female meiotic nuclear division"/>
    <property type="evidence" value="ECO:0007669"/>
    <property type="project" value="EnsemblMetazoa"/>
</dbReference>
<dbReference type="GO" id="GO:0060322">
    <property type="term" value="P:head development"/>
    <property type="evidence" value="ECO:0007669"/>
    <property type="project" value="EnsemblMetazoa"/>
</dbReference>
<dbReference type="GO" id="GO:0035041">
    <property type="term" value="P:sperm DNA decondensation"/>
    <property type="evidence" value="ECO:0007669"/>
    <property type="project" value="EnsemblMetazoa"/>
</dbReference>
<dbReference type="CDD" id="cd02947">
    <property type="entry name" value="TRX_family"/>
    <property type="match status" value="1"/>
</dbReference>
<dbReference type="FunFam" id="3.40.30.10:FF:000359">
    <property type="entry name" value="Thioredoxin"/>
    <property type="match status" value="1"/>
</dbReference>
<dbReference type="Gene3D" id="3.40.30.10">
    <property type="entry name" value="Glutaredoxin"/>
    <property type="match status" value="1"/>
</dbReference>
<dbReference type="InterPro" id="IPR005746">
    <property type="entry name" value="Thioredoxin"/>
</dbReference>
<dbReference type="InterPro" id="IPR036249">
    <property type="entry name" value="Thioredoxin-like_sf"/>
</dbReference>
<dbReference type="InterPro" id="IPR017937">
    <property type="entry name" value="Thioredoxin_CS"/>
</dbReference>
<dbReference type="InterPro" id="IPR013766">
    <property type="entry name" value="Thioredoxin_domain"/>
</dbReference>
<dbReference type="PANTHER" id="PTHR46115">
    <property type="entry name" value="THIOREDOXIN-LIKE PROTEIN 1"/>
    <property type="match status" value="1"/>
</dbReference>
<dbReference type="Pfam" id="PF00085">
    <property type="entry name" value="Thioredoxin"/>
    <property type="match status" value="1"/>
</dbReference>
<dbReference type="PIRSF" id="PIRSF000077">
    <property type="entry name" value="Thioredoxin"/>
    <property type="match status" value="1"/>
</dbReference>
<dbReference type="PRINTS" id="PR00421">
    <property type="entry name" value="THIOREDOXIN"/>
</dbReference>
<dbReference type="SUPFAM" id="SSF52833">
    <property type="entry name" value="Thioredoxin-like"/>
    <property type="match status" value="1"/>
</dbReference>
<dbReference type="PROSITE" id="PS00194">
    <property type="entry name" value="THIOREDOXIN_1"/>
    <property type="match status" value="1"/>
</dbReference>
<dbReference type="PROSITE" id="PS51352">
    <property type="entry name" value="THIOREDOXIN_2"/>
    <property type="match status" value="1"/>
</dbReference>
<comment type="function">
    <text evidence="1">Participates in various redox reactions through the reversible oxidation of its active center dithiol to a disulfide and catalyzes dithiol-disulfide exchange reactions. As a reducing substrate of peroxiredoxin 1, thioredoxin 2 is preferred over thioredoxin 1. Required for female meiosis and early embryonic development (By similarity).</text>
</comment>
<comment type="subcellular location">
    <subcellularLocation>
        <location evidence="1">Nucleus</location>
    </subcellularLocation>
</comment>
<comment type="developmental stage">
    <text evidence="3">Expressed in testes and ovaries.</text>
</comment>
<comment type="similarity">
    <text evidence="4">Belongs to the thioredoxin family.</text>
</comment>
<reference key="1">
    <citation type="journal article" date="2003" name="Genome Res.">
        <title>An evolutionary analysis of orphan genes in Drosophila.</title>
        <authorList>
            <person name="Domazet-Loso T."/>
            <person name="Tautz D."/>
        </authorList>
    </citation>
    <scope>NUCLEOTIDE SEQUENCE [MRNA]</scope>
</reference>
<reference key="2">
    <citation type="journal article" date="2007" name="Nature">
        <title>Evolution of genes and genomes on the Drosophila phylogeny.</title>
        <authorList>
            <consortium name="Drosophila 12 genomes consortium"/>
        </authorList>
    </citation>
    <scope>NUCLEOTIDE SEQUENCE [LARGE SCALE GENOMIC DNA]</scope>
    <source>
        <strain>Tai18E2 / Tucson 14021-0261.01</strain>
    </source>
</reference>
<reference key="3">
    <citation type="journal article" date="2007" name="Dev. Genes Evol.">
        <title>Organization and regulation of sex-specific thioredoxin encoding genes in the genus Drosophila.</title>
        <authorList>
            <person name="Svensson M.J."/>
            <person name="Stenberg P."/>
            <person name="Larsson J."/>
        </authorList>
    </citation>
    <scope>DEVELOPMENTAL STAGE</scope>
</reference>
<organism>
    <name type="scientific">Drosophila yakuba</name>
    <name type="common">Fruit fly</name>
    <dbReference type="NCBI Taxonomy" id="7245"/>
    <lineage>
        <taxon>Eukaryota</taxon>
        <taxon>Metazoa</taxon>
        <taxon>Ecdysozoa</taxon>
        <taxon>Arthropoda</taxon>
        <taxon>Hexapoda</taxon>
        <taxon>Insecta</taxon>
        <taxon>Pterygota</taxon>
        <taxon>Neoptera</taxon>
        <taxon>Endopterygota</taxon>
        <taxon>Diptera</taxon>
        <taxon>Brachycera</taxon>
        <taxon>Muscomorpha</taxon>
        <taxon>Ephydroidea</taxon>
        <taxon>Drosophilidae</taxon>
        <taxon>Drosophila</taxon>
        <taxon>Sophophora</taxon>
    </lineage>
</organism>
<proteinExistence type="evidence at transcript level"/>
<gene>
    <name type="primary">dhd</name>
    <name type="synonym">Trx-1</name>
    <name type="ORF">GE16391</name>
</gene>
<sequence length="107" mass="12354">MASVRTMTDFHKRIEAADDKLIVLDFYANWCGPCKDMESTVKSLARKYSTKAVVLKIDVDKFEELTERYKVRSMPTFVFLRNNRRLAAFSGADEHKLTNMMAKLVKA</sequence>
<keyword id="KW-1015">Disulfide bond</keyword>
<keyword id="KW-0249">Electron transport</keyword>
<keyword id="KW-0539">Nucleus</keyword>
<keyword id="KW-0676">Redox-active center</keyword>
<keyword id="KW-0813">Transport</keyword>
<feature type="chain" id="PRO_0000120033" description="Thioredoxin-1">
    <location>
        <begin position="1"/>
        <end position="107"/>
    </location>
</feature>
<feature type="domain" description="Thioredoxin" evidence="2">
    <location>
        <begin position="2"/>
        <end position="106"/>
    </location>
</feature>
<feature type="active site" description="Nucleophile" evidence="1">
    <location>
        <position position="31"/>
    </location>
</feature>
<feature type="active site" description="Nucleophile" evidence="1">
    <location>
        <position position="34"/>
    </location>
</feature>
<feature type="site" description="Deprotonates C-terminal active site Cys" evidence="1">
    <location>
        <position position="25"/>
    </location>
</feature>
<feature type="site" description="Contributes to redox potential value" evidence="1">
    <location>
        <position position="32"/>
    </location>
</feature>
<feature type="site" description="Contributes to redox potential value" evidence="1">
    <location>
        <position position="33"/>
    </location>
</feature>
<feature type="disulfide bond" description="Redox-active" evidence="2">
    <location>
        <begin position="31"/>
        <end position="34"/>
    </location>
</feature>
<feature type="sequence conflict" description="In Ref. 1; AAR09813." evidence="4" ref="1">
    <original>TDF</original>
    <variation>NDY</variation>
    <location>
        <begin position="8"/>
        <end position="10"/>
    </location>
</feature>
<feature type="sequence conflict" description="In Ref. 1; AAR09813." evidence="4" ref="1">
    <original>N</original>
    <variation>T</variation>
    <location>
        <position position="29"/>
    </location>
</feature>
<feature type="sequence conflict" description="In Ref. 1; AAR09813." evidence="4" ref="1">
    <original>D</original>
    <variation>E</variation>
    <location>
        <position position="36"/>
    </location>
</feature>
<feature type="sequence conflict" description="In Ref. 1; AAR09813." evidence="4" ref="1">
    <original>T</original>
    <variation>S</variation>
    <location>
        <position position="50"/>
    </location>
</feature>
<feature type="sequence conflict" description="In Ref. 1; AAR09813." evidence="4" ref="1">
    <original>N</original>
    <variation>Q</variation>
    <location>
        <position position="82"/>
    </location>
</feature>
<feature type="sequence conflict" description="In Ref. 1; AAR09813." evidence="4" ref="1">
    <original>AFS</original>
    <variation>SFA</variation>
    <location>
        <begin position="88"/>
        <end position="90"/>
    </location>
</feature>